<dbReference type="EC" id="1.1.1.95" evidence="4"/>
<dbReference type="EMBL" id="X97772">
    <property type="protein sequence ID" value="CAA66374.1"/>
    <property type="molecule type" value="mRNA"/>
</dbReference>
<dbReference type="EMBL" id="AJ271975">
    <property type="protein sequence ID" value="CAB89828.1"/>
    <property type="molecule type" value="Genomic_DNA"/>
</dbReference>
<dbReference type="EMBL" id="BC086327">
    <property type="protein sequence ID" value="AAH86327.1"/>
    <property type="molecule type" value="mRNA"/>
</dbReference>
<dbReference type="RefSeq" id="NP_113808.1">
    <property type="nucleotide sequence ID" value="NM_031620.2"/>
</dbReference>
<dbReference type="RefSeq" id="XP_006233072.1">
    <property type="nucleotide sequence ID" value="XM_006233010.1"/>
</dbReference>
<dbReference type="SMR" id="O08651"/>
<dbReference type="BioGRID" id="248638">
    <property type="interactions" value="2"/>
</dbReference>
<dbReference type="FunCoup" id="O08651">
    <property type="interactions" value="999"/>
</dbReference>
<dbReference type="IntAct" id="O08651">
    <property type="interactions" value="2"/>
</dbReference>
<dbReference type="MINT" id="O08651"/>
<dbReference type="STRING" id="10116.ENSRNOP00000053019"/>
<dbReference type="GlyGen" id="O08651">
    <property type="glycosylation" value="1 site, 1 O-linked glycan (1 site)"/>
</dbReference>
<dbReference type="iPTMnet" id="O08651"/>
<dbReference type="PhosphoSitePlus" id="O08651"/>
<dbReference type="SwissPalm" id="O08651"/>
<dbReference type="jPOST" id="O08651"/>
<dbReference type="PaxDb" id="10116-ENSRNOP00000053019"/>
<dbReference type="GeneID" id="58835"/>
<dbReference type="KEGG" id="rno:58835"/>
<dbReference type="UCSC" id="RGD:61987">
    <property type="organism name" value="rat"/>
</dbReference>
<dbReference type="AGR" id="RGD:61987"/>
<dbReference type="CTD" id="26227"/>
<dbReference type="RGD" id="61987">
    <property type="gene designation" value="Phgdh"/>
</dbReference>
<dbReference type="VEuPathDB" id="HostDB:ENSRNOG00000019328"/>
<dbReference type="eggNOG" id="KOG0068">
    <property type="taxonomic scope" value="Eukaryota"/>
</dbReference>
<dbReference type="HOGENOM" id="CLU_019796_8_1_1"/>
<dbReference type="InParanoid" id="O08651"/>
<dbReference type="OrthoDB" id="1621027at2759"/>
<dbReference type="PhylomeDB" id="O08651"/>
<dbReference type="TreeFam" id="TF314548"/>
<dbReference type="BioCyc" id="MetaCyc:MONOMER-10261"/>
<dbReference type="Reactome" id="R-RNO-977347">
    <property type="pathway name" value="Serine biosynthesis"/>
</dbReference>
<dbReference type="UniPathway" id="UPA00135">
    <property type="reaction ID" value="UER00196"/>
</dbReference>
<dbReference type="PRO" id="PR:O08651"/>
<dbReference type="Proteomes" id="UP000002494">
    <property type="component" value="Chromosome 2"/>
</dbReference>
<dbReference type="Bgee" id="ENSRNOG00000019328">
    <property type="expression patterns" value="Expressed in pancreas and 19 other cell types or tissues"/>
</dbReference>
<dbReference type="GO" id="GO:0051287">
    <property type="term" value="F:NAD binding"/>
    <property type="evidence" value="ECO:0007669"/>
    <property type="project" value="InterPro"/>
</dbReference>
<dbReference type="GO" id="GO:0004617">
    <property type="term" value="F:phosphoglycerate dehydrogenase activity"/>
    <property type="evidence" value="ECO:0000314"/>
    <property type="project" value="RGD"/>
</dbReference>
<dbReference type="GO" id="GO:0070314">
    <property type="term" value="P:G1 to G0 transition"/>
    <property type="evidence" value="ECO:0000266"/>
    <property type="project" value="RGD"/>
</dbReference>
<dbReference type="GO" id="GO:0009448">
    <property type="term" value="P:gamma-aminobutyric acid metabolic process"/>
    <property type="evidence" value="ECO:0000266"/>
    <property type="project" value="RGD"/>
</dbReference>
<dbReference type="GO" id="GO:0021782">
    <property type="term" value="P:glial cell development"/>
    <property type="evidence" value="ECO:0000266"/>
    <property type="project" value="RGD"/>
</dbReference>
<dbReference type="GO" id="GO:0006541">
    <property type="term" value="P:glutamine metabolic process"/>
    <property type="evidence" value="ECO:0000266"/>
    <property type="project" value="RGD"/>
</dbReference>
<dbReference type="GO" id="GO:0006544">
    <property type="term" value="P:glycine metabolic process"/>
    <property type="evidence" value="ECO:0000266"/>
    <property type="project" value="RGD"/>
</dbReference>
<dbReference type="GO" id="GO:0006564">
    <property type="term" value="P:L-serine biosynthetic process"/>
    <property type="evidence" value="ECO:0007669"/>
    <property type="project" value="UniProtKB-KW"/>
</dbReference>
<dbReference type="GO" id="GO:0006563">
    <property type="term" value="P:L-serine metabolic process"/>
    <property type="evidence" value="ECO:0000266"/>
    <property type="project" value="RGD"/>
</dbReference>
<dbReference type="GO" id="GO:0021915">
    <property type="term" value="P:neural tube development"/>
    <property type="evidence" value="ECO:0000266"/>
    <property type="project" value="RGD"/>
</dbReference>
<dbReference type="GO" id="GO:0022008">
    <property type="term" value="P:neurogenesis"/>
    <property type="evidence" value="ECO:0000266"/>
    <property type="project" value="RGD"/>
</dbReference>
<dbReference type="GO" id="GO:0031175">
    <property type="term" value="P:neuron projection development"/>
    <property type="evidence" value="ECO:0000266"/>
    <property type="project" value="RGD"/>
</dbReference>
<dbReference type="GO" id="GO:0010468">
    <property type="term" value="P:regulation of gene expression"/>
    <property type="evidence" value="ECO:0000266"/>
    <property type="project" value="RGD"/>
</dbReference>
<dbReference type="GO" id="GO:0009070">
    <property type="term" value="P:serine family amino acid biosynthetic process"/>
    <property type="evidence" value="ECO:0000304"/>
    <property type="project" value="RGD"/>
</dbReference>
<dbReference type="GO" id="GO:0021510">
    <property type="term" value="P:spinal cord development"/>
    <property type="evidence" value="ECO:0000266"/>
    <property type="project" value="RGD"/>
</dbReference>
<dbReference type="GO" id="GO:0019530">
    <property type="term" value="P:taurine metabolic process"/>
    <property type="evidence" value="ECO:0000266"/>
    <property type="project" value="RGD"/>
</dbReference>
<dbReference type="GO" id="GO:0006566">
    <property type="term" value="P:threonine metabolic process"/>
    <property type="evidence" value="ECO:0000266"/>
    <property type="project" value="RGD"/>
</dbReference>
<dbReference type="CDD" id="cd12173">
    <property type="entry name" value="PGDH_4"/>
    <property type="match status" value="1"/>
</dbReference>
<dbReference type="FunFam" id="3.30.1330.90:FF:000005">
    <property type="entry name" value="D-3-phosphoglycerate dehydrogenase"/>
    <property type="match status" value="1"/>
</dbReference>
<dbReference type="FunFam" id="3.40.50.720:FF:000021">
    <property type="entry name" value="D-3-phosphoglycerate dehydrogenase"/>
    <property type="match status" value="1"/>
</dbReference>
<dbReference type="FunFam" id="3.40.50.720:FF:000616">
    <property type="entry name" value="D-3-phosphoglycerate dehydrogenase 2 chloroplastic"/>
    <property type="match status" value="1"/>
</dbReference>
<dbReference type="Gene3D" id="3.30.1330.90">
    <property type="entry name" value="D-3-phosphoglycerate dehydrogenase, domain 3"/>
    <property type="match status" value="1"/>
</dbReference>
<dbReference type="Gene3D" id="3.40.50.720">
    <property type="entry name" value="NAD(P)-binding Rossmann-like Domain"/>
    <property type="match status" value="2"/>
</dbReference>
<dbReference type="InterPro" id="IPR029009">
    <property type="entry name" value="ASB_dom_sf"/>
</dbReference>
<dbReference type="InterPro" id="IPR006139">
    <property type="entry name" value="D-isomer_2_OHA_DH_cat_dom"/>
</dbReference>
<dbReference type="InterPro" id="IPR029753">
    <property type="entry name" value="D-isomer_DH_CS"/>
</dbReference>
<dbReference type="InterPro" id="IPR029752">
    <property type="entry name" value="D-isomer_DH_CS1"/>
</dbReference>
<dbReference type="InterPro" id="IPR006140">
    <property type="entry name" value="D-isomer_DH_NAD-bd"/>
</dbReference>
<dbReference type="InterPro" id="IPR036291">
    <property type="entry name" value="NAD(P)-bd_dom_sf"/>
</dbReference>
<dbReference type="InterPro" id="IPR006236">
    <property type="entry name" value="PGDH"/>
</dbReference>
<dbReference type="InterPro" id="IPR045626">
    <property type="entry name" value="PGDH_ASB_dom"/>
</dbReference>
<dbReference type="NCBIfam" id="TIGR01327">
    <property type="entry name" value="PGDH"/>
    <property type="match status" value="1"/>
</dbReference>
<dbReference type="PANTHER" id="PTHR42938:SF22">
    <property type="entry name" value="D-3-PHOSPHOGLYCERATE DEHYDROGENASE"/>
    <property type="match status" value="1"/>
</dbReference>
<dbReference type="PANTHER" id="PTHR42938">
    <property type="entry name" value="FORMATE DEHYDROGENASE 1"/>
    <property type="match status" value="1"/>
</dbReference>
<dbReference type="Pfam" id="PF00389">
    <property type="entry name" value="2-Hacid_dh"/>
    <property type="match status" value="1"/>
</dbReference>
<dbReference type="Pfam" id="PF02826">
    <property type="entry name" value="2-Hacid_dh_C"/>
    <property type="match status" value="1"/>
</dbReference>
<dbReference type="Pfam" id="PF19304">
    <property type="entry name" value="PGDH_inter"/>
    <property type="match status" value="1"/>
</dbReference>
<dbReference type="SUPFAM" id="SSF52283">
    <property type="entry name" value="Formate/glycerate dehydrogenase catalytic domain-like"/>
    <property type="match status" value="1"/>
</dbReference>
<dbReference type="SUPFAM" id="SSF51735">
    <property type="entry name" value="NAD(P)-binding Rossmann-fold domains"/>
    <property type="match status" value="1"/>
</dbReference>
<dbReference type="SUPFAM" id="SSF143548">
    <property type="entry name" value="Serine metabolism enzymes domain"/>
    <property type="match status" value="1"/>
</dbReference>
<dbReference type="PROSITE" id="PS00065">
    <property type="entry name" value="D_2_HYDROXYACID_DH_1"/>
    <property type="match status" value="1"/>
</dbReference>
<dbReference type="PROSITE" id="PS00670">
    <property type="entry name" value="D_2_HYDROXYACID_DH_2"/>
    <property type="match status" value="1"/>
</dbReference>
<dbReference type="PROSITE" id="PS00671">
    <property type="entry name" value="D_2_HYDROXYACID_DH_3"/>
    <property type="match status" value="1"/>
</dbReference>
<name>SERA_RAT</name>
<sequence length="533" mass="56493">MAFANLRKILISDSLDPCCRKILQDGGLQVVEKQNLSKEELIAELQDCEGLIVRSATKVTADVINAAEKLQVVGRAGTGVDNVDLEAATRKGVLVMNTPNGNSLSAAELTCGMLMCLARQIPQATASMKDGKWDRKKFMGTELNGKTLGILGLGRIGREVAARMQAFGMKTVGYDPIISPEVAASFGVQQLPLEEIWPLCDFITVHTPLLPSTTGLLNDSTFAQCKKGVRVVNCARGGIVDEGALLRALQSGQCAGAALDVFTEEPPRDRALVDHENVISCPHLGASTKEAQSRCGEEIAVQFVDMVKGKSLTGVVNAQALTSAFSPHTKPWIGLAEALGTLMHAWAGSPKGTIQVVTQGTSLKNAGTCLSPAVIVGLLREASKQADVNLVNAKLLVKEAGLNVTTSHSPGVPGEQGIGECLLTVALAGAPYQAVGLVQGTTPMLQMLNGAVFRPEVPLRRGQPLLLFRAQPSDPVMLPTMIGLLAEAGVQLLSYQTSKVSDGDTWHVMGLSSLLPSLDAWKQHVSEAFQFCF</sequence>
<gene>
    <name type="primary">Phgdh</name>
</gene>
<protein>
    <recommendedName>
        <fullName>D-3-phosphoglycerate dehydrogenase</fullName>
        <shortName>3-PGDH</shortName>
        <ecNumber evidence="4">1.1.1.95</ecNumber>
    </recommendedName>
</protein>
<evidence type="ECO:0000250" key="1"/>
<evidence type="ECO:0000250" key="2">
    <source>
        <dbReference type="UniProtKB" id="O43175"/>
    </source>
</evidence>
<evidence type="ECO:0000250" key="3">
    <source>
        <dbReference type="UniProtKB" id="Q61753"/>
    </source>
</evidence>
<evidence type="ECO:0000269" key="4">
    <source>
    </source>
</evidence>
<evidence type="ECO:0000305" key="5"/>
<organism>
    <name type="scientific">Rattus norvegicus</name>
    <name type="common">Rat</name>
    <dbReference type="NCBI Taxonomy" id="10116"/>
    <lineage>
        <taxon>Eukaryota</taxon>
        <taxon>Metazoa</taxon>
        <taxon>Chordata</taxon>
        <taxon>Craniata</taxon>
        <taxon>Vertebrata</taxon>
        <taxon>Euteleostomi</taxon>
        <taxon>Mammalia</taxon>
        <taxon>Eutheria</taxon>
        <taxon>Euarchontoglires</taxon>
        <taxon>Glires</taxon>
        <taxon>Rodentia</taxon>
        <taxon>Myomorpha</taxon>
        <taxon>Muroidea</taxon>
        <taxon>Muridae</taxon>
        <taxon>Murinae</taxon>
        <taxon>Rattus</taxon>
    </lineage>
</organism>
<proteinExistence type="evidence at protein level"/>
<feature type="initiator methionine" description="Removed" evidence="2">
    <location>
        <position position="1"/>
    </location>
</feature>
<feature type="chain" id="PRO_0000076016" description="D-3-phosphoglycerate dehydrogenase">
    <location>
        <begin position="2"/>
        <end position="533"/>
    </location>
</feature>
<feature type="active site" evidence="1">
    <location>
        <position position="236"/>
    </location>
</feature>
<feature type="active site" evidence="1">
    <location>
        <position position="265"/>
    </location>
</feature>
<feature type="active site" description="Proton donor" evidence="1">
    <location>
        <position position="283"/>
    </location>
</feature>
<feature type="binding site" evidence="2">
    <location>
        <position position="78"/>
    </location>
    <ligand>
        <name>NAD(+)</name>
        <dbReference type="ChEBI" id="CHEBI:57540"/>
    </ligand>
</feature>
<feature type="binding site" evidence="2">
    <location>
        <begin position="155"/>
        <end position="156"/>
    </location>
    <ligand>
        <name>NAD(+)</name>
        <dbReference type="ChEBI" id="CHEBI:57540"/>
    </ligand>
</feature>
<feature type="binding site" evidence="2">
    <location>
        <position position="175"/>
    </location>
    <ligand>
        <name>NAD(+)</name>
        <dbReference type="ChEBI" id="CHEBI:57540"/>
    </ligand>
</feature>
<feature type="binding site" evidence="2">
    <location>
        <position position="207"/>
    </location>
    <ligand>
        <name>NAD(+)</name>
        <dbReference type="ChEBI" id="CHEBI:57540"/>
    </ligand>
</feature>
<feature type="binding site" evidence="2">
    <location>
        <begin position="234"/>
        <end position="236"/>
    </location>
    <ligand>
        <name>NAD(+)</name>
        <dbReference type="ChEBI" id="CHEBI:57540"/>
    </ligand>
</feature>
<feature type="binding site" evidence="2">
    <location>
        <position position="260"/>
    </location>
    <ligand>
        <name>NAD(+)</name>
        <dbReference type="ChEBI" id="CHEBI:57540"/>
    </ligand>
</feature>
<feature type="binding site" evidence="2">
    <location>
        <begin position="283"/>
        <end position="286"/>
    </location>
    <ligand>
        <name>NAD(+)</name>
        <dbReference type="ChEBI" id="CHEBI:57540"/>
    </ligand>
</feature>
<feature type="modified residue" description="N-acetylalanine" evidence="2">
    <location>
        <position position="2"/>
    </location>
</feature>
<feature type="modified residue" description="Phosphoserine" evidence="2">
    <location>
        <position position="14"/>
    </location>
</feature>
<feature type="modified residue" description="N6-acetyllysine; alternate" evidence="3">
    <location>
        <position position="21"/>
    </location>
</feature>
<feature type="modified residue" description="N6-acetyllysine" evidence="3">
    <location>
        <position position="58"/>
    </location>
</feature>
<feature type="modified residue" description="Phosphothreonine" evidence="2">
    <location>
        <position position="78"/>
    </location>
</feature>
<feature type="cross-link" description="Glycyl lysine isopeptide (Lys-Gly) (interchain with G-Cter in SUMO1); alternate" evidence="2">
    <location>
        <position position="21"/>
    </location>
</feature>
<feature type="cross-link" description="Glycyl lysine isopeptide (Lys-Gly) (interchain with G-Cter in SUMO2); alternate" evidence="2">
    <location>
        <position position="21"/>
    </location>
</feature>
<comment type="function">
    <text evidence="4">Catalyzes the reversible oxidation of 3-phospho-D-glycerate to 3-phosphonooxypyruvate, the first step of the phosphorylated L-serine biosynthesis pathway. Does not catalyze the reversible oxidation of 2-hydroxyglutarate to 2-oxoglutarate and the reversible oxidation of (S)-malate to oxaloacetate.</text>
</comment>
<comment type="catalytic activity">
    <reaction evidence="4">
        <text>(2R)-3-phosphoglycerate + NAD(+) = 3-phosphooxypyruvate + NADH + H(+)</text>
        <dbReference type="Rhea" id="RHEA:12641"/>
        <dbReference type="ChEBI" id="CHEBI:15378"/>
        <dbReference type="ChEBI" id="CHEBI:18110"/>
        <dbReference type="ChEBI" id="CHEBI:57540"/>
        <dbReference type="ChEBI" id="CHEBI:57945"/>
        <dbReference type="ChEBI" id="CHEBI:58272"/>
        <dbReference type="EC" id="1.1.1.95"/>
    </reaction>
</comment>
<comment type="pathway">
    <text evidence="4">Amino-acid biosynthesis; L-serine biosynthesis; L-serine from 3-phospho-D-glycerate: step 1/3.</text>
</comment>
<comment type="subunit">
    <text evidence="4">Homotetramer.</text>
</comment>
<comment type="tissue specificity">
    <text evidence="4">Liver, kidney, brain, testis.</text>
</comment>
<comment type="similarity">
    <text evidence="5">Belongs to the D-isomer specific 2-hydroxyacid dehydrogenase family.</text>
</comment>
<accession>O08651</accession>
<accession>Q546Q9</accession>
<reference key="1">
    <citation type="journal article" date="1997" name="Biochem. J.">
        <title>Cloning, sequencing and expression of rat liver 3-phosphoglycerate dehydrogenase.</title>
        <authorList>
            <person name="Achouri Y."/>
            <person name="Rider M.H."/>
            <person name="van Schaftingen E."/>
            <person name="Robbi M."/>
        </authorList>
    </citation>
    <scope>NUCLEOTIDE SEQUENCE [MRNA]</scope>
    <scope>SUBUNIT</scope>
    <scope>TISSUE SPECIFICITY</scope>
    <scope>FUNCTION</scope>
    <scope>CATALYTIC ACTIVITY</scope>
    <scope>PATHWAY</scope>
</reference>
<reference key="2">
    <citation type="submission" date="2000-02" db="EMBL/GenBank/DDBJ databases">
        <title>Structure and chromosomal localization of the rat gene encoding 3-phosphoglycerate dehydrogenase.</title>
        <authorList>
            <person name="Robbi M."/>
            <person name="Achouri Y."/>
            <person name="Szpirer C."/>
            <person name="Van Schaftingen E."/>
        </authorList>
    </citation>
    <scope>NUCLEOTIDE SEQUENCE [GENOMIC DNA]</scope>
</reference>
<reference key="3">
    <citation type="journal article" date="2004" name="Genome Res.">
        <title>The status, quality, and expansion of the NIH full-length cDNA project: the Mammalian Gene Collection (MGC).</title>
        <authorList>
            <consortium name="The MGC Project Team"/>
        </authorList>
    </citation>
    <scope>NUCLEOTIDE SEQUENCE [LARGE SCALE MRNA]</scope>
    <source>
        <tissue>Testis</tissue>
    </source>
</reference>
<reference key="4">
    <citation type="submission" date="2006-11" db="UniProtKB">
        <authorList>
            <person name="Lubec G."/>
            <person name="Afjehi-Sadat L."/>
        </authorList>
    </citation>
    <scope>PROTEIN SEQUENCE OF 34-54; 248-270; 271-289 AND 365-380</scope>
    <scope>IDENTIFICATION BY MASS SPECTROMETRY</scope>
    <source>
        <strain>Sprague-Dawley</strain>
        <tissue>Spinal cord</tissue>
    </source>
</reference>
<keyword id="KW-0007">Acetylation</keyword>
<keyword id="KW-0028">Amino-acid biosynthesis</keyword>
<keyword id="KW-0903">Direct protein sequencing</keyword>
<keyword id="KW-1017">Isopeptide bond</keyword>
<keyword id="KW-0520">NAD</keyword>
<keyword id="KW-0560">Oxidoreductase</keyword>
<keyword id="KW-0597">Phosphoprotein</keyword>
<keyword id="KW-1185">Reference proteome</keyword>
<keyword id="KW-0718">Serine biosynthesis</keyword>
<keyword id="KW-0832">Ubl conjugation</keyword>